<protein>
    <recommendedName>
        <fullName evidence="1">Large ribosomal subunit protein bL34</fullName>
    </recommendedName>
    <alternativeName>
        <fullName evidence="2">50S ribosomal protein L34</fullName>
    </alternativeName>
</protein>
<comment type="similarity">
    <text evidence="1">Belongs to the bacterial ribosomal protein bL34 family.</text>
</comment>
<comment type="sequence caution" evidence="2">
    <conflict type="erroneous initiation">
        <sequence resource="EMBL-CDS" id="CAE77669"/>
    </conflict>
</comment>
<sequence>MKRTWQPSKLKHAGVHGFRARMATENGRKVIKARRAKGRVRLSA</sequence>
<dbReference type="EMBL" id="BX293980">
    <property type="protein sequence ID" value="CAE77669.1"/>
    <property type="status" value="ALT_INIT"/>
    <property type="molecule type" value="Genomic_DNA"/>
</dbReference>
<dbReference type="RefSeq" id="NP_976027.3">
    <property type="nucleotide sequence ID" value="NC_005364.2"/>
</dbReference>
<dbReference type="RefSeq" id="WP_015545533.1">
    <property type="nucleotide sequence ID" value="NC_005364.2"/>
</dbReference>
<dbReference type="SMR" id="Q6MRS2"/>
<dbReference type="STRING" id="272632.MSC_1068"/>
<dbReference type="KEGG" id="mmy:MSC_1068"/>
<dbReference type="PATRIC" id="fig|272632.4.peg.1156"/>
<dbReference type="eggNOG" id="COG0230">
    <property type="taxonomic scope" value="Bacteria"/>
</dbReference>
<dbReference type="HOGENOM" id="CLU_129938_2_0_14"/>
<dbReference type="Proteomes" id="UP000001016">
    <property type="component" value="Chromosome"/>
</dbReference>
<dbReference type="GO" id="GO:1990904">
    <property type="term" value="C:ribonucleoprotein complex"/>
    <property type="evidence" value="ECO:0007669"/>
    <property type="project" value="UniProtKB-KW"/>
</dbReference>
<dbReference type="GO" id="GO:0005840">
    <property type="term" value="C:ribosome"/>
    <property type="evidence" value="ECO:0007669"/>
    <property type="project" value="UniProtKB-KW"/>
</dbReference>
<dbReference type="GO" id="GO:0003735">
    <property type="term" value="F:structural constituent of ribosome"/>
    <property type="evidence" value="ECO:0007669"/>
    <property type="project" value="InterPro"/>
</dbReference>
<dbReference type="GO" id="GO:0006412">
    <property type="term" value="P:translation"/>
    <property type="evidence" value="ECO:0007669"/>
    <property type="project" value="UniProtKB-UniRule"/>
</dbReference>
<dbReference type="FunFam" id="1.10.287.3980:FF:000001">
    <property type="entry name" value="Mitochondrial ribosomal protein L34"/>
    <property type="match status" value="1"/>
</dbReference>
<dbReference type="Gene3D" id="1.10.287.3980">
    <property type="match status" value="1"/>
</dbReference>
<dbReference type="HAMAP" id="MF_00391">
    <property type="entry name" value="Ribosomal_bL34"/>
    <property type="match status" value="1"/>
</dbReference>
<dbReference type="InterPro" id="IPR000271">
    <property type="entry name" value="Ribosomal_bL34"/>
</dbReference>
<dbReference type="InterPro" id="IPR020939">
    <property type="entry name" value="Ribosomal_bL34_CS"/>
</dbReference>
<dbReference type="NCBIfam" id="TIGR01030">
    <property type="entry name" value="rpmH_bact"/>
    <property type="match status" value="1"/>
</dbReference>
<dbReference type="PANTHER" id="PTHR14503:SF4">
    <property type="entry name" value="LARGE RIBOSOMAL SUBUNIT PROTEIN BL34M"/>
    <property type="match status" value="1"/>
</dbReference>
<dbReference type="PANTHER" id="PTHR14503">
    <property type="entry name" value="MITOCHONDRIAL RIBOSOMAL PROTEIN 34 FAMILY MEMBER"/>
    <property type="match status" value="1"/>
</dbReference>
<dbReference type="Pfam" id="PF00468">
    <property type="entry name" value="Ribosomal_L34"/>
    <property type="match status" value="1"/>
</dbReference>
<dbReference type="PROSITE" id="PS00784">
    <property type="entry name" value="RIBOSOMAL_L34"/>
    <property type="match status" value="1"/>
</dbReference>
<evidence type="ECO:0000255" key="1">
    <source>
        <dbReference type="HAMAP-Rule" id="MF_00391"/>
    </source>
</evidence>
<evidence type="ECO:0000305" key="2"/>
<feature type="chain" id="PRO_0000187418" description="Large ribosomal subunit protein bL34">
    <location>
        <begin position="1"/>
        <end position="44"/>
    </location>
</feature>
<reference key="1">
    <citation type="journal article" date="2004" name="Genome Res.">
        <title>The genome sequence of Mycoplasma mycoides subsp. mycoides SC type strain PG1T, the causative agent of contagious bovine pleuropneumonia (CBPP).</title>
        <authorList>
            <person name="Westberg J."/>
            <person name="Persson A."/>
            <person name="Holmberg A."/>
            <person name="Goesmann A."/>
            <person name="Lundeberg J."/>
            <person name="Johansson K.-E."/>
            <person name="Pettersson B."/>
            <person name="Uhlen M."/>
        </authorList>
    </citation>
    <scope>NUCLEOTIDE SEQUENCE [LARGE SCALE GENOMIC DNA]</scope>
    <source>
        <strain>CCUG 32753 / NCTC 10114 / PG1</strain>
    </source>
</reference>
<organism>
    <name type="scientific">Mycoplasma mycoides subsp. mycoides SC (strain CCUG 32753 / NCTC 10114 / PG1)</name>
    <dbReference type="NCBI Taxonomy" id="272632"/>
    <lineage>
        <taxon>Bacteria</taxon>
        <taxon>Bacillati</taxon>
        <taxon>Mycoplasmatota</taxon>
        <taxon>Mollicutes</taxon>
        <taxon>Mycoplasmataceae</taxon>
        <taxon>Mycoplasma</taxon>
    </lineage>
</organism>
<keyword id="KW-1185">Reference proteome</keyword>
<keyword id="KW-0687">Ribonucleoprotein</keyword>
<keyword id="KW-0689">Ribosomal protein</keyword>
<gene>
    <name evidence="1" type="primary">rpmH</name>
    <name type="ordered locus">MSC_1068</name>
</gene>
<proteinExistence type="inferred from homology"/>
<accession>Q6MRS2</accession>
<name>RL34_MYCMS</name>